<proteinExistence type="evidence at protein level"/>
<gene>
    <name type="primary">DPH5</name>
    <name type="ordered locus">YLR172C</name>
    <name type="ORF">L9470.17</name>
</gene>
<feature type="chain" id="PRO_0000156147" description="Diphthine methyl ester synthase">
    <location>
        <begin position="1"/>
        <end position="300"/>
    </location>
</feature>
<feature type="binding site" evidence="1">
    <location>
        <position position="9"/>
    </location>
    <ligand>
        <name>S-adenosyl-L-methionine</name>
        <dbReference type="ChEBI" id="CHEBI:59789"/>
    </ligand>
</feature>
<feature type="binding site" evidence="1">
    <location>
        <position position="85"/>
    </location>
    <ligand>
        <name>S-adenosyl-L-methionine</name>
        <dbReference type="ChEBI" id="CHEBI:59789"/>
    </ligand>
</feature>
<feature type="binding site" evidence="1">
    <location>
        <position position="88"/>
    </location>
    <ligand>
        <name>S-adenosyl-L-methionine</name>
        <dbReference type="ChEBI" id="CHEBI:59789"/>
    </ligand>
</feature>
<feature type="binding site" evidence="1">
    <location>
        <begin position="113"/>
        <end position="114"/>
    </location>
    <ligand>
        <name>S-adenosyl-L-methionine</name>
        <dbReference type="ChEBI" id="CHEBI:59789"/>
    </ligand>
</feature>
<feature type="binding site" evidence="1">
    <location>
        <position position="164"/>
    </location>
    <ligand>
        <name>S-adenosyl-L-methionine</name>
        <dbReference type="ChEBI" id="CHEBI:59789"/>
    </ligand>
</feature>
<feature type="binding site" evidence="1">
    <location>
        <position position="222"/>
    </location>
    <ligand>
        <name>S-adenosyl-L-methionine</name>
        <dbReference type="ChEBI" id="CHEBI:59789"/>
    </ligand>
</feature>
<feature type="binding site" evidence="1">
    <location>
        <position position="247"/>
    </location>
    <ligand>
        <name>S-adenosyl-L-methionine</name>
        <dbReference type="ChEBI" id="CHEBI:59789"/>
    </ligand>
</feature>
<feature type="modified residue" description="Phosphoserine" evidence="9">
    <location>
        <position position="172"/>
    </location>
</feature>
<feature type="modified residue" description="Phosphoserine" evidence="8 10">
    <location>
        <position position="298"/>
    </location>
</feature>
<feature type="sequence conflict" description="In Ref. 4; AAS56273." evidence="7" ref="4">
    <original>P</original>
    <variation>L</variation>
    <location>
        <position position="287"/>
    </location>
</feature>
<organism>
    <name type="scientific">Saccharomyces cerevisiae (strain ATCC 204508 / S288c)</name>
    <name type="common">Baker's yeast</name>
    <dbReference type="NCBI Taxonomy" id="559292"/>
    <lineage>
        <taxon>Eukaryota</taxon>
        <taxon>Fungi</taxon>
        <taxon>Dikarya</taxon>
        <taxon>Ascomycota</taxon>
        <taxon>Saccharomycotina</taxon>
        <taxon>Saccharomycetes</taxon>
        <taxon>Saccharomycetales</taxon>
        <taxon>Saccharomycetaceae</taxon>
        <taxon>Saccharomyces</taxon>
    </lineage>
</organism>
<dbReference type="EC" id="2.1.1.314" evidence="6"/>
<dbReference type="EMBL" id="M83375">
    <property type="protein sequence ID" value="AAA34577.1"/>
    <property type="molecule type" value="Genomic_DNA"/>
</dbReference>
<dbReference type="EMBL" id="U17246">
    <property type="protein sequence ID" value="AAB67469.1"/>
    <property type="molecule type" value="Genomic_DNA"/>
</dbReference>
<dbReference type="EMBL" id="AY557947">
    <property type="protein sequence ID" value="AAS56273.1"/>
    <property type="molecule type" value="Genomic_DNA"/>
</dbReference>
<dbReference type="EMBL" id="X70279">
    <property type="protein sequence ID" value="CAA49764.1"/>
    <property type="molecule type" value="Genomic_DNA"/>
</dbReference>
<dbReference type="EMBL" id="BK006945">
    <property type="protein sequence ID" value="DAA09492.1"/>
    <property type="molecule type" value="Genomic_DNA"/>
</dbReference>
<dbReference type="PIR" id="S30890">
    <property type="entry name" value="S30890"/>
</dbReference>
<dbReference type="RefSeq" id="NP_013273.1">
    <property type="nucleotide sequence ID" value="NM_001182059.1"/>
</dbReference>
<dbReference type="SMR" id="P32469"/>
<dbReference type="BioGRID" id="31443">
    <property type="interactions" value="214"/>
</dbReference>
<dbReference type="DIP" id="DIP-4237N"/>
<dbReference type="FunCoup" id="P32469">
    <property type="interactions" value="1092"/>
</dbReference>
<dbReference type="IntAct" id="P32469">
    <property type="interactions" value="7"/>
</dbReference>
<dbReference type="MINT" id="P32469"/>
<dbReference type="STRING" id="4932.YLR172C"/>
<dbReference type="iPTMnet" id="P32469"/>
<dbReference type="PaxDb" id="4932-YLR172C"/>
<dbReference type="PeptideAtlas" id="P32469"/>
<dbReference type="EnsemblFungi" id="YLR172C_mRNA">
    <property type="protein sequence ID" value="YLR172C"/>
    <property type="gene ID" value="YLR172C"/>
</dbReference>
<dbReference type="GeneID" id="850869"/>
<dbReference type="KEGG" id="sce:YLR172C"/>
<dbReference type="AGR" id="SGD:S000004162"/>
<dbReference type="SGD" id="S000004162">
    <property type="gene designation" value="DPH5"/>
</dbReference>
<dbReference type="VEuPathDB" id="FungiDB:YLR172C"/>
<dbReference type="eggNOG" id="KOG3123">
    <property type="taxonomic scope" value="Eukaryota"/>
</dbReference>
<dbReference type="GeneTree" id="ENSGT00390000010568"/>
<dbReference type="HOGENOM" id="CLU_066040_1_0_1"/>
<dbReference type="InParanoid" id="P32469"/>
<dbReference type="OMA" id="HNASIMS"/>
<dbReference type="OrthoDB" id="2516at2759"/>
<dbReference type="BioCyc" id="MetaCyc:MONOMER-15582"/>
<dbReference type="BioCyc" id="YEAST:MONOMER-15582"/>
<dbReference type="BRENDA" id="2.1.1.314">
    <property type="organism ID" value="984"/>
</dbReference>
<dbReference type="Reactome" id="R-SCE-5358493">
    <property type="pathway name" value="Synthesis of diphthamide-EEF2"/>
</dbReference>
<dbReference type="UniPathway" id="UPA00559"/>
<dbReference type="BioGRID-ORCS" id="850869">
    <property type="hits" value="2 hits in 10 CRISPR screens"/>
</dbReference>
<dbReference type="PRO" id="PR:P32469"/>
<dbReference type="Proteomes" id="UP000002311">
    <property type="component" value="Chromosome XII"/>
</dbReference>
<dbReference type="RNAct" id="P32469">
    <property type="molecule type" value="protein"/>
</dbReference>
<dbReference type="GO" id="GO:0005737">
    <property type="term" value="C:cytoplasm"/>
    <property type="evidence" value="ECO:0007005"/>
    <property type="project" value="SGD"/>
</dbReference>
<dbReference type="GO" id="GO:0141133">
    <property type="term" value="F:diphthine methyl ester synthase activity"/>
    <property type="evidence" value="ECO:0000314"/>
    <property type="project" value="FlyBase"/>
</dbReference>
<dbReference type="GO" id="GO:0032259">
    <property type="term" value="P:methylation"/>
    <property type="evidence" value="ECO:0007669"/>
    <property type="project" value="UniProtKB-KW"/>
</dbReference>
<dbReference type="GO" id="GO:0017183">
    <property type="term" value="P:protein histidyl modification to diphthamide"/>
    <property type="evidence" value="ECO:0000314"/>
    <property type="project" value="SGD"/>
</dbReference>
<dbReference type="CDD" id="cd11647">
    <property type="entry name" value="DHP5_DphB"/>
    <property type="match status" value="1"/>
</dbReference>
<dbReference type="FunFam" id="3.30.950.10:FF:000004">
    <property type="entry name" value="Diphthine synthase putative"/>
    <property type="match status" value="1"/>
</dbReference>
<dbReference type="FunFam" id="3.40.1010.10:FF:000004">
    <property type="entry name" value="Putative diphthine synthase"/>
    <property type="match status" value="1"/>
</dbReference>
<dbReference type="Gene3D" id="3.40.1010.10">
    <property type="entry name" value="Cobalt-precorrin-4 Transmethylase, Domain 1"/>
    <property type="match status" value="1"/>
</dbReference>
<dbReference type="Gene3D" id="3.30.950.10">
    <property type="entry name" value="Methyltransferase, Cobalt-precorrin-4 Transmethylase, Domain 2"/>
    <property type="match status" value="1"/>
</dbReference>
<dbReference type="HAMAP" id="MF_01084">
    <property type="entry name" value="Diphthine_synth"/>
    <property type="match status" value="1"/>
</dbReference>
<dbReference type="InterPro" id="IPR000878">
    <property type="entry name" value="4pyrrol_Mease"/>
</dbReference>
<dbReference type="InterPro" id="IPR035996">
    <property type="entry name" value="4pyrrol_Methylase_sf"/>
</dbReference>
<dbReference type="InterPro" id="IPR014777">
    <property type="entry name" value="4pyrrole_Mease_sub1"/>
</dbReference>
<dbReference type="InterPro" id="IPR014776">
    <property type="entry name" value="4pyrrole_Mease_sub2"/>
</dbReference>
<dbReference type="InterPro" id="IPR004551">
    <property type="entry name" value="Dphthn_synthase"/>
</dbReference>
<dbReference type="NCBIfam" id="TIGR00522">
    <property type="entry name" value="dph5"/>
    <property type="match status" value="1"/>
</dbReference>
<dbReference type="PANTHER" id="PTHR10882:SF0">
    <property type="entry name" value="DIPHTHINE METHYL ESTER SYNTHASE"/>
    <property type="match status" value="1"/>
</dbReference>
<dbReference type="PANTHER" id="PTHR10882">
    <property type="entry name" value="DIPHTHINE SYNTHASE"/>
    <property type="match status" value="1"/>
</dbReference>
<dbReference type="Pfam" id="PF00590">
    <property type="entry name" value="TP_methylase"/>
    <property type="match status" value="1"/>
</dbReference>
<dbReference type="PIRSF" id="PIRSF036432">
    <property type="entry name" value="Diphthine_synth"/>
    <property type="match status" value="1"/>
</dbReference>
<dbReference type="SUPFAM" id="SSF53790">
    <property type="entry name" value="Tetrapyrrole methylase"/>
    <property type="match status" value="1"/>
</dbReference>
<sequence>MLYLIGLGLSYKSDITVRGLEAIKKCSRVYLEHYTSILMAASQEELESYYGKEIILADRELVETGSKQILNNADKEDVAFLVVGDPFGATTHTDLVLRAKREAIPVEIIHNASVMNAVGACGLQLYNFGQTVSMVFFTDNWRPDSWYDKIWENRKIGLHTLVLLDIKVKEQSIENMARGRLIYEPPRYMSIAQCCEQLLEIEEKRGTKAYTPDTPAVAISRLGSSSQSFKSGTISELANYDSGEPLHSLVILGRQCHELELEYLLEFADDKEKFGKDVANDQEYFKPAAWVPPTEDDSDE</sequence>
<evidence type="ECO:0000250" key="1"/>
<evidence type="ECO:0000269" key="2">
    <source>
    </source>
</evidence>
<evidence type="ECO:0000269" key="3">
    <source>
    </source>
</evidence>
<evidence type="ECO:0000269" key="4">
    <source>
    </source>
</evidence>
<evidence type="ECO:0000269" key="5">
    <source>
    </source>
</evidence>
<evidence type="ECO:0000269" key="6">
    <source>
    </source>
</evidence>
<evidence type="ECO:0000305" key="7"/>
<evidence type="ECO:0007744" key="8">
    <source>
    </source>
</evidence>
<evidence type="ECO:0007744" key="9">
    <source>
    </source>
</evidence>
<evidence type="ECO:0007744" key="10">
    <source>
    </source>
</evidence>
<comment type="function">
    <text evidence="4 6">S-adenosyl-L-methionine-dependent methyltransferase that catalyzes four methylations of the modified target histidine residue in translation elongation factor 2 (EF-2), to form an intermediate called diphthine methyl ester. The four successive methylation reactions represent the second step of diphthamide biosynthesis.</text>
</comment>
<comment type="catalytic activity">
    <reaction evidence="6">
        <text>2-[(3S)-amino-3-carboxypropyl]-L-histidyl-[translation elongation factor 2] + 4 S-adenosyl-L-methionine = diphthine methyl ester-[translation elongation factor 2] + 4 S-adenosyl-L-homocysteine + 3 H(+)</text>
        <dbReference type="Rhea" id="RHEA:42652"/>
        <dbReference type="Rhea" id="RHEA-COMP:9749"/>
        <dbReference type="Rhea" id="RHEA-COMP:10173"/>
        <dbReference type="ChEBI" id="CHEBI:15378"/>
        <dbReference type="ChEBI" id="CHEBI:57856"/>
        <dbReference type="ChEBI" id="CHEBI:59789"/>
        <dbReference type="ChEBI" id="CHEBI:73995"/>
        <dbReference type="ChEBI" id="CHEBI:79005"/>
        <dbReference type="EC" id="2.1.1.314"/>
    </reaction>
</comment>
<comment type="pathway">
    <text>Protein modification; peptidyl-diphthamide biosynthesis.</text>
</comment>
<comment type="subcellular location">
    <subcellularLocation>
        <location evidence="2">Cytoplasm</location>
    </subcellularLocation>
</comment>
<comment type="disruption phenotype">
    <text evidence="5">Resistance to sordarin.</text>
</comment>
<comment type="miscellaneous">
    <text>2-[3-carboxy-3-(methylammonio)propyl]-L-histidine and the corresponding dimethyl compound can also act as acceptors.</text>
</comment>
<comment type="miscellaneous">
    <text evidence="3">Present with 13480 molecules/cell in log phase SD medium.</text>
</comment>
<comment type="similarity">
    <text evidence="7">Belongs to the diphthine synthase family.</text>
</comment>
<name>DPH5_YEAST</name>
<keyword id="KW-0963">Cytoplasm</keyword>
<keyword id="KW-0489">Methyltransferase</keyword>
<keyword id="KW-0597">Phosphoprotein</keyword>
<keyword id="KW-1185">Reference proteome</keyword>
<keyword id="KW-0949">S-adenosyl-L-methionine</keyword>
<keyword id="KW-0808">Transferase</keyword>
<accession>P32469</accession>
<accession>D6VYH6</accession>
<accession>Q6Q5L4</accession>
<protein>
    <recommendedName>
        <fullName>Diphthine methyl ester synthase</fullName>
        <ecNumber evidence="6">2.1.1.314</ecNumber>
    </recommendedName>
    <alternativeName>
        <fullName>Diphthamide biosynthesis methyltransferase</fullName>
    </alternativeName>
</protein>
<reference key="1">
    <citation type="journal article" date="1992" name="Mol. Cell. Biol.">
        <title>DPH5, a methyltransferase gene required for diphthamide biosynthesis in Saccharomyces cerevisiae.</title>
        <authorList>
            <person name="Mattheakis L.C."/>
            <person name="Shen W.H."/>
            <person name="Collier R.J."/>
        </authorList>
    </citation>
    <scope>NUCLEOTIDE SEQUENCE [GENOMIC DNA]</scope>
    <scope>FUNCTION</scope>
</reference>
<reference key="2">
    <citation type="journal article" date="1997" name="Nature">
        <title>The nucleotide sequence of Saccharomyces cerevisiae chromosome XII.</title>
        <authorList>
            <person name="Johnston M."/>
            <person name="Hillier L.W."/>
            <person name="Riles L."/>
            <person name="Albermann K."/>
            <person name="Andre B."/>
            <person name="Ansorge W."/>
            <person name="Benes V."/>
            <person name="Brueckner M."/>
            <person name="Delius H."/>
            <person name="Dubois E."/>
            <person name="Duesterhoeft A."/>
            <person name="Entian K.-D."/>
            <person name="Floeth M."/>
            <person name="Goffeau A."/>
            <person name="Hebling U."/>
            <person name="Heumann K."/>
            <person name="Heuss-Neitzel D."/>
            <person name="Hilbert H."/>
            <person name="Hilger F."/>
            <person name="Kleine K."/>
            <person name="Koetter P."/>
            <person name="Louis E.J."/>
            <person name="Messenguy F."/>
            <person name="Mewes H.-W."/>
            <person name="Miosga T."/>
            <person name="Moestl D."/>
            <person name="Mueller-Auer S."/>
            <person name="Nentwich U."/>
            <person name="Obermaier B."/>
            <person name="Piravandi E."/>
            <person name="Pohl T.M."/>
            <person name="Portetelle D."/>
            <person name="Purnelle B."/>
            <person name="Rechmann S."/>
            <person name="Rieger M."/>
            <person name="Rinke M."/>
            <person name="Rose M."/>
            <person name="Scharfe M."/>
            <person name="Scherens B."/>
            <person name="Scholler P."/>
            <person name="Schwager C."/>
            <person name="Schwarz S."/>
            <person name="Underwood A.P."/>
            <person name="Urrestarazu L.A."/>
            <person name="Vandenbol M."/>
            <person name="Verhasselt P."/>
            <person name="Vierendeels F."/>
            <person name="Voet M."/>
            <person name="Volckaert G."/>
            <person name="Voss H."/>
            <person name="Wambutt R."/>
            <person name="Wedler E."/>
            <person name="Wedler H."/>
            <person name="Zimmermann F.K."/>
            <person name="Zollner A."/>
            <person name="Hani J."/>
            <person name="Hoheisel J.D."/>
        </authorList>
    </citation>
    <scope>NUCLEOTIDE SEQUENCE [LARGE SCALE GENOMIC DNA]</scope>
    <source>
        <strain>ATCC 204508 / S288c</strain>
    </source>
</reference>
<reference key="3">
    <citation type="journal article" date="2014" name="G3 (Bethesda)">
        <title>The reference genome sequence of Saccharomyces cerevisiae: Then and now.</title>
        <authorList>
            <person name="Engel S.R."/>
            <person name="Dietrich F.S."/>
            <person name="Fisk D.G."/>
            <person name="Binkley G."/>
            <person name="Balakrishnan R."/>
            <person name="Costanzo M.C."/>
            <person name="Dwight S.S."/>
            <person name="Hitz B.C."/>
            <person name="Karra K."/>
            <person name="Nash R.S."/>
            <person name="Weng S."/>
            <person name="Wong E.D."/>
            <person name="Lloyd P."/>
            <person name="Skrzypek M.S."/>
            <person name="Miyasato S.R."/>
            <person name="Simison M."/>
            <person name="Cherry J.M."/>
        </authorList>
    </citation>
    <scope>GENOME REANNOTATION</scope>
    <source>
        <strain>ATCC 204508 / S288c</strain>
    </source>
</reference>
<reference key="4">
    <citation type="journal article" date="2007" name="Genome Res.">
        <title>Approaching a complete repository of sequence-verified protein-encoding clones for Saccharomyces cerevisiae.</title>
        <authorList>
            <person name="Hu Y."/>
            <person name="Rolfs A."/>
            <person name="Bhullar B."/>
            <person name="Murthy T.V.S."/>
            <person name="Zhu C."/>
            <person name="Berger M.F."/>
            <person name="Camargo A.A."/>
            <person name="Kelley F."/>
            <person name="McCarron S."/>
            <person name="Jepson D."/>
            <person name="Richardson A."/>
            <person name="Raphael J."/>
            <person name="Moreira D."/>
            <person name="Taycher E."/>
            <person name="Zuo D."/>
            <person name="Mohr S."/>
            <person name="Kane M.F."/>
            <person name="Williamson J."/>
            <person name="Simpson A.J.G."/>
            <person name="Bulyk M.L."/>
            <person name="Harlow E."/>
            <person name="Marsischky G."/>
            <person name="Kolodner R.D."/>
            <person name="LaBaer J."/>
        </authorList>
    </citation>
    <scope>NUCLEOTIDE SEQUENCE [GENOMIC DNA]</scope>
    <source>
        <strain>ATCC 204508 / S288c</strain>
    </source>
</reference>
<reference key="5">
    <citation type="journal article" date="1993" name="Biochim. Biophys. Acta">
        <title>Cloning of the YAP19 gene encoding a putative yeast homolog of AP19, the mammalian small chain of the clathrin-assembly proteins.</title>
        <authorList>
            <person name="Nakai M."/>
            <person name="Takada T."/>
            <person name="Endo T."/>
        </authorList>
    </citation>
    <scope>NUCLEOTIDE SEQUENCE [GENOMIC DNA] OF 228-300</scope>
    <source>
        <strain>SP1</strain>
    </source>
</reference>
<reference key="6">
    <citation type="journal article" date="2003" name="Nature">
        <title>Global analysis of protein localization in budding yeast.</title>
        <authorList>
            <person name="Huh W.-K."/>
            <person name="Falvo J.V."/>
            <person name="Gerke L.C."/>
            <person name="Carroll A.S."/>
            <person name="Howson R.W."/>
            <person name="Weissman J.S."/>
            <person name="O'Shea E.K."/>
        </authorList>
    </citation>
    <scope>SUBCELLULAR LOCATION [LARGE SCALE ANALYSIS]</scope>
</reference>
<reference key="7">
    <citation type="journal article" date="2003" name="Nature">
        <title>Global analysis of protein expression in yeast.</title>
        <authorList>
            <person name="Ghaemmaghami S."/>
            <person name="Huh W.-K."/>
            <person name="Bower K."/>
            <person name="Howson R.W."/>
            <person name="Belle A."/>
            <person name="Dephoure N."/>
            <person name="O'Shea E.K."/>
            <person name="Weissman J.S."/>
        </authorList>
    </citation>
    <scope>LEVEL OF PROTEIN EXPRESSION [LARGE SCALE ANALYSIS]</scope>
</reference>
<reference key="8">
    <citation type="journal article" date="2007" name="J. Proteome Res.">
        <title>Large-scale phosphorylation analysis of alpha-factor-arrested Saccharomyces cerevisiae.</title>
        <authorList>
            <person name="Li X."/>
            <person name="Gerber S.A."/>
            <person name="Rudner A.D."/>
            <person name="Beausoleil S.A."/>
            <person name="Haas W."/>
            <person name="Villen J."/>
            <person name="Elias J.E."/>
            <person name="Gygi S.P."/>
        </authorList>
    </citation>
    <scope>PHOSPHORYLATION [LARGE SCALE ANALYSIS] AT SER-298</scope>
    <scope>IDENTIFICATION BY MASS SPECTROMETRY [LARGE SCALE ANALYSIS]</scope>
    <source>
        <strain>ADR376</strain>
    </source>
</reference>
<reference key="9">
    <citation type="journal article" date="2008" name="Mol. Cell. Proteomics">
        <title>A multidimensional chromatography technology for in-depth phosphoproteome analysis.</title>
        <authorList>
            <person name="Albuquerque C.P."/>
            <person name="Smolka M.B."/>
            <person name="Payne S.H."/>
            <person name="Bafna V."/>
            <person name="Eng J."/>
            <person name="Zhou H."/>
        </authorList>
    </citation>
    <scope>PHOSPHORYLATION [LARGE SCALE ANALYSIS] AT SER-172</scope>
    <scope>IDENTIFICATION BY MASS SPECTROMETRY [LARGE SCALE ANALYSIS]</scope>
</reference>
<reference key="10">
    <citation type="journal article" date="2008" name="Mol. Microbiol.">
        <title>A versatile partner of eukaryotic protein complexes that is involved in multiple biological processes: Kti11/Dph3.</title>
        <authorList>
            <person name="Baer C."/>
            <person name="Zabel R."/>
            <person name="Liu S."/>
            <person name="Stark M.J."/>
            <person name="Schaffrath R."/>
        </authorList>
    </citation>
    <scope>DISRUPTION PHENOTYPE</scope>
</reference>
<reference key="11">
    <citation type="journal article" date="2009" name="Science">
        <title>Global analysis of Cdk1 substrate phosphorylation sites provides insights into evolution.</title>
        <authorList>
            <person name="Holt L.J."/>
            <person name="Tuch B.B."/>
            <person name="Villen J."/>
            <person name="Johnson A.D."/>
            <person name="Gygi S.P."/>
            <person name="Morgan D.O."/>
        </authorList>
    </citation>
    <scope>PHOSPHORYLATION [LARGE SCALE ANALYSIS] AT SER-298</scope>
    <scope>IDENTIFICATION BY MASS SPECTROMETRY [LARGE SCALE ANALYSIS]</scope>
</reference>
<reference key="12">
    <citation type="journal article" date="2014" name="J. Am. Chem. Soc.">
        <title>Dph7 catalyzes a previously unknown demethylation step in diphthamide biosynthesis.</title>
        <authorList>
            <person name="Lin Z."/>
            <person name="Su X."/>
            <person name="Chen W."/>
            <person name="Ci B."/>
            <person name="Zhang S."/>
            <person name="Lin H."/>
        </authorList>
    </citation>
    <scope>FUNCTION</scope>
    <scope>CATALYTIC ACTIVITY</scope>
</reference>